<comment type="function">
    <text evidence="3 7">Antimicrobial peptide that potently acts against several species of Gram-positive bacteria (PubMed:16222292, PubMed:19472324). It selectively inhibits peptidoglycan biosynthesis through complex formation with the cell wall precursor lipid II (1:1 molar ratio) thus inhibiting cell wall synthesis (PubMed:20508130). It does not disrupt cell membranes (PubMed:20508130). Is especially active against numerous clinical isolates of S.pneumoniae, including all 90 different serotypes and isolates resistant to clinically used antibiotics (PubMed:16222292). In vitro, shows considerable selectivity for bacteria over mammalian cells (PubMed:16222292). The peptide synthesized in D-amino acids does not show antibacterial activity (PubMed:19472324). In vitro, acts on voltage-gated potassium channels by moderately inhibiting mammalian Kv1.3/KCNA3 (IC(50)=2.8 uM), and moderately inhibiting others potassium channels (PubMed:25568977).</text>
</comment>
<comment type="subcellular location">
    <subcellularLocation>
        <location evidence="12">Secreted</location>
    </subcellularLocation>
    <subcellularLocation>
        <location evidence="6">Host cell membrane</location>
    </subcellularLocation>
</comment>
<comment type="mass spectrometry" mass="4398.8" method="Electrospray" evidence="3"/>
<comment type="pharmaceutical">
    <text evidence="13">Plectasin could be used as a possible antibiotic, especially against S.pneumoniae infections.</text>
</comment>
<comment type="pharmaceutical">
    <text evidence="14">An improved derivative NZ2114 can be used as an antibiotic for the methicillin-resistant S.aureus (MRSA).</text>
</comment>
<comment type="miscellaneous">
    <text evidence="3">In mice infected by S.pneumoniae, it has an efficacy comparable to vancomycin in the peritoneal model and to penicillin in the pneumonia model.</text>
</comment>
<comment type="similarity">
    <text evidence="2">Belongs to the invertebrate defensin family. Type 2 subfamily.</text>
</comment>
<comment type="online information" name="The antimicrobial peptide database">
    <link uri="https://wangapd3.com/database/query_output.php?ID=00549"/>
</comment>
<gene>
    <name type="primary">DEF</name>
</gene>
<accession>Q53I06</accession>
<feature type="signal peptide" evidence="1">
    <location>
        <begin position="1"/>
        <end position="23"/>
    </location>
</feature>
<feature type="propeptide" id="PRO_0000042753" evidence="3">
    <location>
        <begin position="24"/>
        <end position="55"/>
    </location>
</feature>
<feature type="chain" id="PRO_0000042754" description="Fungal defensin plectasin">
    <location>
        <begin position="56"/>
        <end position="95"/>
    </location>
</feature>
<feature type="region of interest" description="Binds to membrane interface" evidence="15">
    <location>
        <begin position="61"/>
        <end position="64"/>
    </location>
</feature>
<feature type="region of interest" description="Binds to membrane interface" evidence="15">
    <location>
        <begin position="86"/>
        <end position="92"/>
    </location>
</feature>
<feature type="binding site" evidence="15">
    <location>
        <position position="57"/>
    </location>
    <ligand>
        <name>beta-D-GlcNAc-(1-&gt;4)-Mur2Ac(oyl-L-Ala-gamma-D-Glu-L-Lys-D-Ala-D-Ala)-di-trans,octa-cis-undecaprenyl diphosphate</name>
        <dbReference type="ChEBI" id="CHEBI:60033"/>
    </ligand>
</feature>
<feature type="binding site" evidence="15">
    <location>
        <position position="58"/>
    </location>
    <ligand>
        <name>beta-D-GlcNAc-(1-&gt;4)-Mur2Ac(oyl-L-Ala-gamma-D-Glu-L-Lys-D-Ala-D-Ala)-di-trans,octa-cis-undecaprenyl diphosphate</name>
        <dbReference type="ChEBI" id="CHEBI:60033"/>
    </ligand>
</feature>
<feature type="binding site" evidence="15">
    <location>
        <position position="59"/>
    </location>
    <ligand>
        <name>beta-D-GlcNAc-(1-&gt;4)-Mur2Ac(oyl-L-Ala-gamma-D-Glu-L-Lys-D-Ala-D-Ala)-di-trans,octa-cis-undecaprenyl diphosphate</name>
        <dbReference type="ChEBI" id="CHEBI:60033"/>
    </ligand>
</feature>
<feature type="binding site" evidence="15">
    <location>
        <position position="67"/>
    </location>
    <ligand>
        <name>beta-D-GlcNAc-(1-&gt;4)-Mur2Ac(oyl-L-Ala-gamma-D-Glu-L-Lys-D-Ala-D-Ala)-di-trans,octa-cis-undecaprenyl diphosphate</name>
        <dbReference type="ChEBI" id="CHEBI:60033"/>
    </ligand>
</feature>
<feature type="binding site" evidence="15">
    <location>
        <position position="73"/>
    </location>
    <ligand>
        <name>beta-D-GlcNAc-(1-&gt;4)-Mur2Ac(oyl-L-Ala-gamma-D-Glu-L-Lys-D-Ala-D-Ala)-di-trans,octa-cis-undecaprenyl diphosphate</name>
        <dbReference type="ChEBI" id="CHEBI:60033"/>
    </ligand>
</feature>
<feature type="binding site" evidence="15">
    <location>
        <position position="84"/>
    </location>
    <ligand>
        <name>beta-D-GlcNAc-(1-&gt;4)-Mur2Ac(oyl-L-Ala-gamma-D-Glu-L-Lys-D-Ala-D-Ala)-di-trans,octa-cis-undecaprenyl diphosphate</name>
        <dbReference type="ChEBI" id="CHEBI:60033"/>
    </ligand>
</feature>
<feature type="binding site" evidence="15">
    <location>
        <position position="86"/>
    </location>
    <ligand>
        <name>beta-D-GlcNAc-(1-&gt;4)-Mur2Ac(oyl-L-Ala-gamma-D-Glu-L-Lys-D-Ala-D-Ala)-di-trans,octa-cis-undecaprenyl diphosphate</name>
        <dbReference type="ChEBI" id="CHEBI:60033"/>
    </ligand>
</feature>
<feature type="binding site" evidence="15">
    <location>
        <position position="88"/>
    </location>
    <ligand>
        <name>beta-D-GlcNAc-(1-&gt;4)-Mur2Ac(oyl-L-Ala-gamma-D-Glu-L-Lys-D-Ala-D-Ala)-di-trans,octa-cis-undecaprenyl diphosphate</name>
        <dbReference type="ChEBI" id="CHEBI:60033"/>
    </ligand>
</feature>
<feature type="binding site" evidence="15">
    <location>
        <position position="92"/>
    </location>
    <ligand>
        <name>beta-D-GlcNAc-(1-&gt;4)-Mur2Ac(oyl-L-Ala-gamma-D-Glu-L-Lys-D-Ala-D-Ala)-di-trans,octa-cis-undecaprenyl diphosphate</name>
        <dbReference type="ChEBI" id="CHEBI:60033"/>
    </ligand>
</feature>
<feature type="binding site" evidence="15">
    <location>
        <position position="93"/>
    </location>
    <ligand>
        <name>beta-D-GlcNAc-(1-&gt;4)-Mur2Ac(oyl-L-Ala-gamma-D-Glu-L-Lys-D-Ala-D-Ala)-di-trans,octa-cis-undecaprenyl diphosphate</name>
        <dbReference type="ChEBI" id="CHEBI:60033"/>
    </ligand>
</feature>
<feature type="disulfide bond" evidence="3 5 22 23">
    <location>
        <begin position="59"/>
        <end position="85"/>
    </location>
</feature>
<feature type="disulfide bond" evidence="3 5 22 23">
    <location>
        <begin position="70"/>
        <end position="92"/>
    </location>
</feature>
<feature type="disulfide bond" evidence="3 5 22 23">
    <location>
        <begin position="74"/>
        <end position="94"/>
    </location>
</feature>
<feature type="mutagenesis site" description="Plectasin derivative NZ2114; increase in antibacterial spectrum by including the methicillin-resistant A.aureus (MRSA)." evidence="4 16">
    <original>DEDDMQ</original>
    <variation>NEDDLR</variation>
    <location>
        <begin position="64"/>
        <end position="69"/>
    </location>
</feature>
<feature type="mutagenesis site" description="Complete loss of antibacterial activity." evidence="6">
    <original>D</original>
    <variation>A</variation>
    <variation>C</variation>
    <variation>E</variation>
    <variation>F</variation>
    <variation>G</variation>
    <variation>H</variation>
    <variation>I</variation>
    <variation>K</variation>
    <variation>L</variation>
    <variation>M</variation>
    <variation>N</variation>
    <variation>P</variation>
    <variation>Q</variation>
    <variation>R</variation>
    <variation>S</variation>
    <variation>T</variation>
    <variation>V</variation>
    <variation>W</variation>
    <variation>Y</variation>
    <location>
        <position position="67"/>
    </location>
</feature>
<feature type="mutagenesis site" description="Complete loss of antibacterial activity." evidence="6">
    <original>Y</original>
    <variation>A</variation>
    <variation>C</variation>
    <variation>D</variation>
    <variation>E</variation>
    <variation>F</variation>
    <variation>G</variation>
    <variation>H</variation>
    <variation>I</variation>
    <variation>K</variation>
    <variation>L</variation>
    <variation>M</variation>
    <variation>N</variation>
    <variation>P</variation>
    <variation>Q</variation>
    <variation>R</variation>
    <variation>S</variation>
    <variation>T</variation>
    <variation>V</variation>
    <variation>W</variation>
    <location>
        <position position="84"/>
    </location>
</feature>
<feature type="mutagenesis site" description="Complete loss of antibacterial activity." evidence="6">
    <original>A</original>
    <variation>C</variation>
    <variation>D</variation>
    <variation>E</variation>
    <variation>F</variation>
    <variation>H</variation>
    <variation>I</variation>
    <variation>K</variation>
    <variation>L</variation>
    <variation>M</variation>
    <variation>N</variation>
    <variation>P</variation>
    <variation>Q</variation>
    <variation>R</variation>
    <variation>S</variation>
    <variation>T</variation>
    <variation>V</variation>
    <variation>W</variation>
    <variation>Y</variation>
    <location>
        <position position="86"/>
    </location>
</feature>
<feature type="mutagenesis site" description="No change of antibacterial activity." evidence="6">
    <original>A</original>
    <variation>G</variation>
    <location>
        <position position="86"/>
    </location>
</feature>
<feature type="mutagenesis site" description="Complete loss of antibacterial activity." evidence="6">
    <original>G</original>
    <variation>A</variation>
    <variation>C</variation>
    <variation>D</variation>
    <variation>E</variation>
    <variation>F</variation>
    <variation>H</variation>
    <variation>I</variation>
    <variation>K</variation>
    <variation>L</variation>
    <variation>M</variation>
    <variation>N</variation>
    <variation>P</variation>
    <variation>Q</variation>
    <variation>R</variation>
    <variation>S</variation>
    <variation>T</variation>
    <variation>V</variation>
    <variation>W</variation>
    <variation>Y</variation>
    <location>
        <position position="88"/>
    </location>
</feature>
<feature type="mutagenesis site" description="Complete loss of antibacterial activity." evidence="6">
    <original>K</original>
    <variation>A</variation>
    <variation>C</variation>
    <variation>D</variation>
    <variation>E</variation>
    <variation>F</variation>
    <variation>G</variation>
    <variation>H</variation>
    <variation>I</variation>
    <variation>L</variation>
    <variation>M</variation>
    <variation>N</variation>
    <variation>P</variation>
    <variation>Q</variation>
    <variation>S</variation>
    <variation>T</variation>
    <variation>V</variation>
    <variation>W</variation>
    <variation>Y</variation>
    <location>
        <position position="93"/>
    </location>
</feature>
<feature type="mutagenesis site" description="No change of antibacterial activity." evidence="6">
    <original>K</original>
    <variation>R</variation>
    <location>
        <position position="93"/>
    </location>
</feature>
<feature type="turn" evidence="25">
    <location>
        <begin position="57"/>
        <end position="59"/>
    </location>
</feature>
<feature type="helix" evidence="26">
    <location>
        <begin position="61"/>
        <end position="63"/>
    </location>
</feature>
<feature type="helix" evidence="24">
    <location>
        <begin position="67"/>
        <end position="76"/>
    </location>
</feature>
<feature type="strand" evidence="24">
    <location>
        <begin position="82"/>
        <end position="86"/>
    </location>
</feature>
<feature type="turn" evidence="24">
    <location>
        <begin position="87"/>
        <end position="90"/>
    </location>
</feature>
<feature type="strand" evidence="24">
    <location>
        <begin position="91"/>
        <end position="95"/>
    </location>
</feature>
<organism>
    <name type="scientific">Pseudoplectania nigrella</name>
    <name type="common">Ebony cup</name>
    <name type="synonym">Peziza nigrella</name>
    <dbReference type="NCBI Taxonomy" id="96584"/>
    <lineage>
        <taxon>Eukaryota</taxon>
        <taxon>Fungi</taxon>
        <taxon>Dikarya</taxon>
        <taxon>Ascomycota</taxon>
        <taxon>Pezizomycotina</taxon>
        <taxon>Pezizomycetes</taxon>
        <taxon>Pezizales</taxon>
        <taxon>Sarcosomataceae</taxon>
        <taxon>Pseudoplectania</taxon>
    </lineage>
</organism>
<reference evidence="17" key="1">
    <citation type="journal article" date="2005" name="Nature">
        <title>Plectasin is a peptide antibiotic with therapeutic potential from a saprophytic fungus.</title>
        <authorList>
            <person name="Mygind P.H."/>
            <person name="Fischer R.L."/>
            <person name="Schnorr K.M."/>
            <person name="Hansen M.T."/>
            <person name="Soenksen C.P."/>
            <person name="Ludvigsen S."/>
            <person name="Raventos D.S."/>
            <person name="Buskov S."/>
            <person name="Christensen B."/>
            <person name="De Maria L."/>
            <person name="Taboureau O."/>
            <person name="Yaver D."/>
            <person name="Elvig-Joergensen S.G."/>
            <person name="Soerensen M.V."/>
            <person name="Christensen B.E."/>
            <person name="Kjaerulf S."/>
            <person name="Frimodt-Moller N."/>
            <person name="Lehrer R.I."/>
            <person name="Zasloff M."/>
            <person name="Kristensen H.-H."/>
        </authorList>
    </citation>
    <scope>NUCLEOTIDE SEQUENCE [MRNA]</scope>
    <scope>PROTEIN SEQUENCE OF N-TERMINUS</scope>
    <scope>STRUCTURE BY NMR OF 56-95</scope>
    <scope>FUNCTION</scope>
    <scope>MASS SPECTROMETRY</scope>
    <scope>DISULFIDE BONDS</scope>
</reference>
<reference key="2">
    <citation type="journal article" date="2009" name="Antimicrob. Agents Chemother.">
        <title>In vivo pharmacodynamic characterization of a novel plectasin antibiotic, NZ2114, in a murine infection model.</title>
        <authorList>
            <person name="Andes D."/>
            <person name="Craig W."/>
            <person name="Nielsen L.A."/>
            <person name="Kristensen H.H."/>
        </authorList>
    </citation>
    <scope>PHARMACEUTICAL</scope>
</reference>
<reference key="3">
    <citation type="journal article" date="2010" name="Science">
        <title>Plectasin, a fungal defensin, targets the bacterial cell wall precursor Lipid II.</title>
        <authorList>
            <person name="Schneider T."/>
            <person name="Kruse T."/>
            <person name="Wimmer R."/>
            <person name="Wiedemann I."/>
            <person name="Sass V."/>
            <person name="Pag U."/>
            <person name="Jansen A."/>
            <person name="Nielsen A.K."/>
            <person name="Mygind P.H."/>
            <person name="Raventos D.S."/>
            <person name="Neve S."/>
            <person name="Ravn B."/>
            <person name="Bonvin A.M."/>
            <person name="De Maria L."/>
            <person name="Andersen A.S."/>
            <person name="Gammelgaard L.K."/>
            <person name="Sahl H.G."/>
            <person name="Kristensen H.H."/>
        </authorList>
    </citation>
    <scope>FUNCTION</scope>
    <scope>3D-STRUCTURE MODELING</scope>
    <scope>MUTAGENESIS OF ASP-67; TYR-84; ALA-86; GLY-88 AND LYS-93</scope>
    <scope>BINDING TO MEMBRANE INTERFACE</scope>
    <scope>BINDING TO LIPID II</scope>
</reference>
<reference key="4">
    <citation type="journal article" date="2015" name="Toxins">
        <title>Plectasin, first animal toxin-like fungal defensin blocking potassium channels through recognizing channel pore region.</title>
        <authorList>
            <person name="Xiang F."/>
            <person name="Xie Z."/>
            <person name="Feng J."/>
            <person name="Yang W."/>
            <person name="Cao Z."/>
            <person name="Li W."/>
            <person name="Chen Z."/>
            <person name="Wu Y."/>
        </authorList>
    </citation>
    <scope>FUNCTION</scope>
</reference>
<reference evidence="18 19" key="5">
    <citation type="journal article" date="2009" name="Protein Sci.">
        <title>Racemic crystallography of synthetic protein enantiomers used to determine the X-ray structure of plectasin by direct methods.</title>
        <authorList>
            <person name="Mandal K."/>
            <person name="Pentelute B.L."/>
            <person name="Tereshko V."/>
            <person name="Thammavongsa V."/>
            <person name="Schneewind O."/>
            <person name="Kossiakoff A.A."/>
            <person name="Kent S.B."/>
        </authorList>
    </citation>
    <scope>X-RAY CRYSTALLOGRAPHY (1.0 ANGSTROMS) OF 56-95 OF L- AND D-PLECTASIN</scope>
    <scope>FUNCTION</scope>
    <scope>SYNTHESIS OF 56-95</scope>
</reference>
<reference evidence="20 21" key="6">
    <citation type="submission" date="2019-05" db="PDB data bank">
        <title>Solution structure of plectasin derivative NZ2114.</title>
        <authorList>
            <person name="Wang J.H."/>
            <person name="Mao R.Y."/>
            <person name="Liu X.H."/>
        </authorList>
    </citation>
    <scope>STRUCTURE BY NMR OF 56-95 OF PLECTASIN DERIVATIVE NZ2114</scope>
    <scope>MUTAGENESIS OF 64-ASP--GLN-69</scope>
</reference>
<name>DEFPL_PSENR</name>
<evidence type="ECO:0000255" key="1"/>
<evidence type="ECO:0000255" key="2">
    <source>
        <dbReference type="PROSITE-ProRule" id="PRU00710"/>
    </source>
</evidence>
<evidence type="ECO:0000269" key="3">
    <source>
    </source>
</evidence>
<evidence type="ECO:0000269" key="4">
    <source>
    </source>
</evidence>
<evidence type="ECO:0000269" key="5">
    <source>
    </source>
</evidence>
<evidence type="ECO:0000269" key="6">
    <source>
    </source>
</evidence>
<evidence type="ECO:0000269" key="7">
    <source>
    </source>
</evidence>
<evidence type="ECO:0000303" key="8">
    <source>
    </source>
</evidence>
<evidence type="ECO:0000303" key="9">
    <source>
    </source>
</evidence>
<evidence type="ECO:0000303" key="10">
    <source>
    </source>
</evidence>
<evidence type="ECO:0000303" key="11">
    <source>
    </source>
</evidence>
<evidence type="ECO:0000305" key="12"/>
<evidence type="ECO:0000305" key="13">
    <source>
    </source>
</evidence>
<evidence type="ECO:0000305" key="14">
    <source>
    </source>
</evidence>
<evidence type="ECO:0000305" key="15">
    <source>
    </source>
</evidence>
<evidence type="ECO:0000305" key="16">
    <source ref="6"/>
</evidence>
<evidence type="ECO:0000312" key="17">
    <source>
        <dbReference type="PDB" id="1ZFU"/>
    </source>
</evidence>
<evidence type="ECO:0000312" key="18">
    <source>
        <dbReference type="PDB" id="3E7R"/>
    </source>
</evidence>
<evidence type="ECO:0000312" key="19">
    <source>
        <dbReference type="PDB" id="3E7U"/>
    </source>
</evidence>
<evidence type="ECO:0000312" key="20">
    <source>
        <dbReference type="PDB" id="6K50"/>
    </source>
</evidence>
<evidence type="ECO:0000312" key="21">
    <source>
        <dbReference type="PDB" id="6K51"/>
    </source>
</evidence>
<evidence type="ECO:0007744" key="22">
    <source>
        <dbReference type="PDB" id="1ZFU"/>
    </source>
</evidence>
<evidence type="ECO:0007744" key="23">
    <source>
        <dbReference type="PDB" id="3E7U"/>
    </source>
</evidence>
<evidence type="ECO:0007829" key="24">
    <source>
        <dbReference type="PDB" id="3E7R"/>
    </source>
</evidence>
<evidence type="ECO:0007829" key="25">
    <source>
        <dbReference type="PDB" id="6K51"/>
    </source>
</evidence>
<evidence type="ECO:0007829" key="26">
    <source>
        <dbReference type="PDB" id="7OAE"/>
    </source>
</evidence>
<keyword id="KW-0002">3D-structure</keyword>
<keyword id="KW-0044">Antibiotic</keyword>
<keyword id="KW-0929">Antimicrobial</keyword>
<keyword id="KW-0165">Cleavage on pair of basic residues</keyword>
<keyword id="KW-0211">Defensin</keyword>
<keyword id="KW-0903">Direct protein sequencing</keyword>
<keyword id="KW-1015">Disulfide bond</keyword>
<keyword id="KW-1032">Host cell membrane</keyword>
<keyword id="KW-1043">Host membrane</keyword>
<keyword id="KW-0872">Ion channel impairing toxin</keyword>
<keyword id="KW-0472">Membrane</keyword>
<keyword id="KW-0582">Pharmaceutical</keyword>
<keyword id="KW-0632">Potassium channel impairing toxin</keyword>
<keyword id="KW-0964">Secreted</keyword>
<keyword id="KW-0732">Signal</keyword>
<keyword id="KW-0800">Toxin</keyword>
<keyword id="KW-1220">Voltage-gated potassium channel impairing toxin</keyword>
<sequence length="95" mass="10254">MQFTTILSIGITVFGLLNTGAFAAPQPVPEAYAVSDPEAHPDDFAGMDANQLQKRGFGCNGPWDEDDMQCHNHCKSIKGYKGGYCAKGGFVCKCY</sequence>
<protein>
    <recommendedName>
        <fullName evidence="8 9 10 11">Fungal defensin plectasin</fullName>
    </recommendedName>
</protein>
<proteinExistence type="evidence at protein level"/>
<dbReference type="EMBL" id="AJ964941">
    <property type="protein sequence ID" value="CAI83768.1"/>
    <property type="molecule type" value="mRNA"/>
</dbReference>
<dbReference type="PDB" id="1ZFU">
    <property type="method" value="NMR"/>
    <property type="chains" value="A=56-95"/>
</dbReference>
<dbReference type="PDB" id="3E7R">
    <property type="method" value="X-ray"/>
    <property type="resolution" value="1.00 A"/>
    <property type="chains" value="L=56-95"/>
</dbReference>
<dbReference type="PDB" id="3E7U">
    <property type="method" value="X-ray"/>
    <property type="resolution" value="1.35 A"/>
    <property type="chains" value="X=56-95"/>
</dbReference>
<dbReference type="PDB" id="6K50">
    <property type="method" value="NMR"/>
    <property type="chains" value="A=56-95"/>
</dbReference>
<dbReference type="PDB" id="6K51">
    <property type="method" value="NMR"/>
    <property type="chains" value="A=56-95"/>
</dbReference>
<dbReference type="PDB" id="7O76">
    <property type="method" value="X-ray"/>
    <property type="resolution" value="1.13 A"/>
    <property type="chains" value="XXX=56-95"/>
</dbReference>
<dbReference type="PDB" id="7OAE">
    <property type="method" value="EM"/>
    <property type="resolution" value="2.00 A"/>
    <property type="chains" value="0/1/2/3/4/5/6/7/8/9/A/B/C/D/E/F/G/H/I/J/K/L/M/N/O/P/Q/R/S/T=56-95"/>
</dbReference>
<dbReference type="PDB" id="7OAG">
    <property type="method" value="EM"/>
    <property type="resolution" value="3.40 A"/>
    <property type="chains" value="A/B/C/D/E/F/G/H/I/J/K/L/M/N/O/P/Q/R/S/T/U/V/W/X/Y=56-95"/>
</dbReference>
<dbReference type="PDB" id="9E3V">
    <property type="method" value="NMR"/>
    <property type="chains" value="A=56-95"/>
</dbReference>
<dbReference type="PDB" id="9E3W">
    <property type="method" value="NMR"/>
    <property type="chains" value="A=56-95"/>
</dbReference>
<dbReference type="PDB" id="9E3X">
    <property type="method" value="NMR"/>
    <property type="chains" value="A=56-95"/>
</dbReference>
<dbReference type="PDB" id="9E3Y">
    <property type="method" value="NMR"/>
    <property type="chains" value="A=56-95"/>
</dbReference>
<dbReference type="PDB" id="9E3Z">
    <property type="method" value="NMR"/>
    <property type="chains" value="A=56-95"/>
</dbReference>
<dbReference type="PDBsum" id="1ZFU"/>
<dbReference type="PDBsum" id="3E7R"/>
<dbReference type="PDBsum" id="3E7U"/>
<dbReference type="PDBsum" id="6K50"/>
<dbReference type="PDBsum" id="6K51"/>
<dbReference type="PDBsum" id="7O76"/>
<dbReference type="PDBsum" id="7OAE"/>
<dbReference type="PDBsum" id="7OAG"/>
<dbReference type="PDBsum" id="9E3V"/>
<dbReference type="PDBsum" id="9E3W"/>
<dbReference type="PDBsum" id="9E3X"/>
<dbReference type="PDBsum" id="9E3Y"/>
<dbReference type="PDBsum" id="9E3Z"/>
<dbReference type="BMRB" id="Q53I06"/>
<dbReference type="EMDB" id="EMD-12775"/>
<dbReference type="EMDB" id="EMD-12776"/>
<dbReference type="SMR" id="Q53I06"/>
<dbReference type="TCDB" id="1.C.47.2.1">
    <property type="family name" value="the insect/fungal defensin (insect/fungal defensin) family"/>
</dbReference>
<dbReference type="EvolutionaryTrace" id="Q53I06"/>
<dbReference type="GO" id="GO:0005576">
    <property type="term" value="C:extracellular region"/>
    <property type="evidence" value="ECO:0007669"/>
    <property type="project" value="UniProtKB-SubCell"/>
</dbReference>
<dbReference type="GO" id="GO:0020002">
    <property type="term" value="C:host cell plasma membrane"/>
    <property type="evidence" value="ECO:0007669"/>
    <property type="project" value="UniProtKB-SubCell"/>
</dbReference>
<dbReference type="GO" id="GO:0016020">
    <property type="term" value="C:membrane"/>
    <property type="evidence" value="ECO:0007669"/>
    <property type="project" value="UniProtKB-KW"/>
</dbReference>
<dbReference type="GO" id="GO:0015459">
    <property type="term" value="F:potassium channel regulator activity"/>
    <property type="evidence" value="ECO:0007669"/>
    <property type="project" value="UniProtKB-KW"/>
</dbReference>
<dbReference type="GO" id="GO:0090729">
    <property type="term" value="F:toxin activity"/>
    <property type="evidence" value="ECO:0007669"/>
    <property type="project" value="UniProtKB-KW"/>
</dbReference>
<dbReference type="GO" id="GO:0042742">
    <property type="term" value="P:defense response to bacterium"/>
    <property type="evidence" value="ECO:0007669"/>
    <property type="project" value="UniProtKB-KW"/>
</dbReference>
<dbReference type="CDD" id="cd00107">
    <property type="entry name" value="Knot1"/>
    <property type="match status" value="1"/>
</dbReference>
<dbReference type="Gene3D" id="3.30.30.10">
    <property type="entry name" value="Knottin, scorpion toxin-like"/>
    <property type="match status" value="1"/>
</dbReference>
<dbReference type="InterPro" id="IPR001542">
    <property type="entry name" value="Defensin_invertebrate/fungal"/>
</dbReference>
<dbReference type="InterPro" id="IPR003614">
    <property type="entry name" value="Scorpion_toxin-like"/>
</dbReference>
<dbReference type="InterPro" id="IPR036574">
    <property type="entry name" value="Scorpion_toxin-like_sf"/>
</dbReference>
<dbReference type="Pfam" id="PF01097">
    <property type="entry name" value="Defensin_2"/>
    <property type="match status" value="1"/>
</dbReference>
<dbReference type="SUPFAM" id="SSF57095">
    <property type="entry name" value="Scorpion toxin-like"/>
    <property type="match status" value="1"/>
</dbReference>
<dbReference type="PROSITE" id="PS51378">
    <property type="entry name" value="INVERT_DEFENSINS"/>
    <property type="match status" value="1"/>
</dbReference>